<accession>Q4R5X8</accession>
<comment type="function">
    <text evidence="2">Accessory subunit of the mitochondrial membrane respiratory chain NADH dehydrogenase (Complex I), that is believed not to be involved in catalysis. Complex I functions in the transfer of electrons from NADH to the respiratory chain. The immediate electron acceptor for the enzyme is believed to be ubiquinone.</text>
</comment>
<comment type="subunit">
    <text evidence="2">Mammalian complex I is composed of 45 different subunits. This is a component of the iron-sulfur (IP) fragment of the enzyme.</text>
</comment>
<comment type="subcellular location">
    <subcellularLocation>
        <location evidence="2">Mitochondrion inner membrane</location>
        <topology evidence="2">Peripheral membrane protein</topology>
        <orientation evidence="2">Matrix side</orientation>
    </subcellularLocation>
</comment>
<comment type="similarity">
    <text evidence="4">Belongs to the complex I NDUFS6 subunit family.</text>
</comment>
<sequence length="124" mass="13774">MAASATFYRLLSRCGKAARSRPLGARCFGVRVSPTGEKITHTGQVYDDKDYRRIRFVDRQKEVNENFAIDLIAEQPVSEVQTRVIACDGGGGALGHPKVYINLDKETKTGTCGYCGLQFRQHPH</sequence>
<proteinExistence type="evidence at transcript level"/>
<reference key="1">
    <citation type="submission" date="2005-06" db="EMBL/GenBank/DDBJ databases">
        <title>DNA sequences of macaque genes expressed in brain or testis and its evolutionary implications.</title>
        <authorList>
            <consortium name="International consortium for macaque cDNA sequencing and analysis"/>
        </authorList>
    </citation>
    <scope>NUCLEOTIDE SEQUENCE [LARGE SCALE MRNA]</scope>
    <source>
        <tissue>Testis</tissue>
    </source>
</reference>
<dbReference type="EMBL" id="AB169414">
    <property type="protein sequence ID" value="BAE01497.1"/>
    <property type="molecule type" value="mRNA"/>
</dbReference>
<dbReference type="RefSeq" id="NP_001270954.1">
    <property type="nucleotide sequence ID" value="NM_001284025.1"/>
</dbReference>
<dbReference type="SMR" id="Q4R5X8"/>
<dbReference type="STRING" id="9541.ENSMFAP00000019404"/>
<dbReference type="eggNOG" id="KOG3456">
    <property type="taxonomic scope" value="Eukaryota"/>
</dbReference>
<dbReference type="Proteomes" id="UP000233100">
    <property type="component" value="Unplaced"/>
</dbReference>
<dbReference type="GO" id="GO:0005743">
    <property type="term" value="C:mitochondrial inner membrane"/>
    <property type="evidence" value="ECO:0007669"/>
    <property type="project" value="UniProtKB-SubCell"/>
</dbReference>
<dbReference type="GO" id="GO:0045271">
    <property type="term" value="C:respiratory chain complex I"/>
    <property type="evidence" value="ECO:0000250"/>
    <property type="project" value="UniProtKB"/>
</dbReference>
<dbReference type="GO" id="GO:0006120">
    <property type="term" value="P:mitochondrial electron transport, NADH to ubiquinone"/>
    <property type="evidence" value="ECO:0007669"/>
    <property type="project" value="InterPro"/>
</dbReference>
<dbReference type="FunFam" id="2.60.260.40:FF:000002">
    <property type="entry name" value="NADH dehydrogenase [ubiquinone] iron-sulfur protein 6, mitochondrial"/>
    <property type="match status" value="1"/>
</dbReference>
<dbReference type="Gene3D" id="2.60.260.40">
    <property type="entry name" value="q5lls5 like domains"/>
    <property type="match status" value="1"/>
</dbReference>
<dbReference type="InterPro" id="IPR016668">
    <property type="entry name" value="NDUFS6"/>
</dbReference>
<dbReference type="InterPro" id="IPR019401">
    <property type="entry name" value="Znf_CHCC"/>
</dbReference>
<dbReference type="PANTHER" id="PTHR13156:SF0">
    <property type="entry name" value="NADH DEHYDROGENASE [UBIQUINONE] IRON-SULFUR PROTEIN 6, MITOCHONDRIAL"/>
    <property type="match status" value="1"/>
</dbReference>
<dbReference type="PANTHER" id="PTHR13156">
    <property type="entry name" value="NADH-UBIQUINONE OXIDOREDUCTASE 13 KD-A SUBUNIT"/>
    <property type="match status" value="1"/>
</dbReference>
<dbReference type="Pfam" id="PF10276">
    <property type="entry name" value="zf-CHCC"/>
    <property type="match status" value="1"/>
</dbReference>
<dbReference type="PIRSF" id="PIRSF016564">
    <property type="entry name" value="CI-13KD-A"/>
    <property type="match status" value="1"/>
</dbReference>
<name>NDUS6_MACFA</name>
<protein>
    <recommendedName>
        <fullName>NADH dehydrogenase [ubiquinone] iron-sulfur protein 6, mitochondrial</fullName>
    </recommendedName>
    <alternativeName>
        <fullName>Complex I-13kD-A</fullName>
        <shortName>CI-13kD-A</shortName>
    </alternativeName>
    <alternativeName>
        <fullName>NADH-ubiquinone oxidoreductase 13 kDa-A subunit</fullName>
    </alternativeName>
</protein>
<keyword id="KW-0007">Acetylation</keyword>
<keyword id="KW-0249">Electron transport</keyword>
<keyword id="KW-0472">Membrane</keyword>
<keyword id="KW-0496">Mitochondrion</keyword>
<keyword id="KW-0999">Mitochondrion inner membrane</keyword>
<keyword id="KW-1185">Reference proteome</keyword>
<keyword id="KW-0679">Respiratory chain</keyword>
<keyword id="KW-0809">Transit peptide</keyword>
<keyword id="KW-0813">Transport</keyword>
<evidence type="ECO:0000250" key="1"/>
<evidence type="ECO:0000250" key="2">
    <source>
        <dbReference type="UniProtKB" id="O75380"/>
    </source>
</evidence>
<evidence type="ECO:0000250" key="3">
    <source>
        <dbReference type="UniProtKB" id="P52503"/>
    </source>
</evidence>
<evidence type="ECO:0000305" key="4"/>
<gene>
    <name type="primary">NDUFS6</name>
    <name type="ORF">QtsA-19927</name>
</gene>
<organism>
    <name type="scientific">Macaca fascicularis</name>
    <name type="common">Crab-eating macaque</name>
    <name type="synonym">Cynomolgus monkey</name>
    <dbReference type="NCBI Taxonomy" id="9541"/>
    <lineage>
        <taxon>Eukaryota</taxon>
        <taxon>Metazoa</taxon>
        <taxon>Chordata</taxon>
        <taxon>Craniata</taxon>
        <taxon>Vertebrata</taxon>
        <taxon>Euteleostomi</taxon>
        <taxon>Mammalia</taxon>
        <taxon>Eutheria</taxon>
        <taxon>Euarchontoglires</taxon>
        <taxon>Primates</taxon>
        <taxon>Haplorrhini</taxon>
        <taxon>Catarrhini</taxon>
        <taxon>Cercopithecidae</taxon>
        <taxon>Cercopithecinae</taxon>
        <taxon>Macaca</taxon>
    </lineage>
</organism>
<feature type="transit peptide" description="Mitochondrion" evidence="1">
    <location>
        <begin position="1"/>
        <end position="28"/>
    </location>
</feature>
<feature type="chain" id="PRO_0000043172" description="NADH dehydrogenase [ubiquinone] iron-sulfur protein 6, mitochondrial">
    <location>
        <begin position="29"/>
        <end position="124"/>
    </location>
</feature>
<feature type="modified residue" description="N6-acetyllysine" evidence="3">
    <location>
        <position position="98"/>
    </location>
</feature>